<proteinExistence type="inferred from homology"/>
<comment type="similarity">
    <text evidence="1">Belongs to the UPF0246 family.</text>
</comment>
<organism>
    <name type="scientific">Streptococcus pneumoniae (strain Taiwan19F-14)</name>
    <dbReference type="NCBI Taxonomy" id="487213"/>
    <lineage>
        <taxon>Bacteria</taxon>
        <taxon>Bacillati</taxon>
        <taxon>Bacillota</taxon>
        <taxon>Bacilli</taxon>
        <taxon>Lactobacillales</taxon>
        <taxon>Streptococcaceae</taxon>
        <taxon>Streptococcus</taxon>
    </lineage>
</organism>
<reference key="1">
    <citation type="journal article" date="2010" name="Genome Biol.">
        <title>Structure and dynamics of the pan-genome of Streptococcus pneumoniae and closely related species.</title>
        <authorList>
            <person name="Donati C."/>
            <person name="Hiller N.L."/>
            <person name="Tettelin H."/>
            <person name="Muzzi A."/>
            <person name="Croucher N.J."/>
            <person name="Angiuoli S.V."/>
            <person name="Oggioni M."/>
            <person name="Dunning Hotopp J.C."/>
            <person name="Hu F.Z."/>
            <person name="Riley D.R."/>
            <person name="Covacci A."/>
            <person name="Mitchell T.J."/>
            <person name="Bentley S.D."/>
            <person name="Kilian M."/>
            <person name="Ehrlich G.D."/>
            <person name="Rappuoli R."/>
            <person name="Moxon E.R."/>
            <person name="Masignani V."/>
        </authorList>
    </citation>
    <scope>NUCLEOTIDE SEQUENCE [LARGE SCALE GENOMIC DNA]</scope>
    <source>
        <strain>Taiwan19F-14</strain>
    </source>
</reference>
<name>Y1488_STRZT</name>
<accession>C1CSG8</accession>
<gene>
    <name type="ordered locus">SPT_1488</name>
</gene>
<protein>
    <recommendedName>
        <fullName evidence="1">UPF0246 protein SPT_1488</fullName>
    </recommendedName>
</protein>
<dbReference type="EMBL" id="CP000921">
    <property type="protein sequence ID" value="ACO22555.1"/>
    <property type="molecule type" value="Genomic_DNA"/>
</dbReference>
<dbReference type="SMR" id="C1CSG8"/>
<dbReference type="KEGG" id="snt:SPT_1488"/>
<dbReference type="HOGENOM" id="CLU_061989_2_1_9"/>
<dbReference type="GO" id="GO:0005829">
    <property type="term" value="C:cytosol"/>
    <property type="evidence" value="ECO:0007669"/>
    <property type="project" value="TreeGrafter"/>
</dbReference>
<dbReference type="GO" id="GO:0033194">
    <property type="term" value="P:response to hydroperoxide"/>
    <property type="evidence" value="ECO:0007669"/>
    <property type="project" value="TreeGrafter"/>
</dbReference>
<dbReference type="HAMAP" id="MF_00652">
    <property type="entry name" value="UPF0246"/>
    <property type="match status" value="1"/>
</dbReference>
<dbReference type="InterPro" id="IPR005583">
    <property type="entry name" value="YaaA"/>
</dbReference>
<dbReference type="NCBIfam" id="NF002543">
    <property type="entry name" value="PRK02101.1-4"/>
    <property type="match status" value="1"/>
</dbReference>
<dbReference type="PANTHER" id="PTHR30283:SF4">
    <property type="entry name" value="PEROXIDE STRESS RESISTANCE PROTEIN YAAA"/>
    <property type="match status" value="1"/>
</dbReference>
<dbReference type="PANTHER" id="PTHR30283">
    <property type="entry name" value="PEROXIDE STRESS RESPONSE PROTEIN YAAA"/>
    <property type="match status" value="1"/>
</dbReference>
<dbReference type="Pfam" id="PF03883">
    <property type="entry name" value="H2O2_YaaD"/>
    <property type="match status" value="1"/>
</dbReference>
<sequence length="242" mass="27466">MKILIPTAKEMNTDLPSIEAIPLKPESQTVLDALALYSASQLESFYKVSAEKAAEEFQNIQALKRQTAQHYPALKLFDGLMYRNIKRDKLTEAEQDYLENHVFITSALYGVVPALSPMAPHRLDFLMKLKVAGKTLKSHWKAVYDEALKKEEVIFSLLSSEFETVFSKEIRAKMVTFKFMEDRGGQLKIHSTISKKARGAFLTALIENQVQTVGEARRLNFAGFVYREDLSQPQGLVFVKEV</sequence>
<evidence type="ECO:0000255" key="1">
    <source>
        <dbReference type="HAMAP-Rule" id="MF_00652"/>
    </source>
</evidence>
<feature type="chain" id="PRO_1000200431" description="UPF0246 protein SPT_1488">
    <location>
        <begin position="1"/>
        <end position="242"/>
    </location>
</feature>